<dbReference type="EC" id="1.17.4.1"/>
<dbReference type="EMBL" id="U00096">
    <property type="protein sequence ID" value="AAC75722.1"/>
    <property type="molecule type" value="Genomic_DNA"/>
</dbReference>
<dbReference type="EMBL" id="AP009048">
    <property type="protein sequence ID" value="BAA16539.2"/>
    <property type="molecule type" value="Genomic_DNA"/>
</dbReference>
<dbReference type="EMBL" id="X79787">
    <property type="protein sequence ID" value="CAA56186.1"/>
    <property type="molecule type" value="Genomic_DNA"/>
</dbReference>
<dbReference type="EMBL" id="M31530">
    <property type="status" value="NOT_ANNOTATED_CDS"/>
    <property type="molecule type" value="Genomic_DNA"/>
</dbReference>
<dbReference type="PIR" id="D65047">
    <property type="entry name" value="D65047"/>
</dbReference>
<dbReference type="RefSeq" id="NP_417161.1">
    <property type="nucleotide sequence ID" value="NC_000913.3"/>
</dbReference>
<dbReference type="RefSeq" id="WP_000246534.1">
    <property type="nucleotide sequence ID" value="NZ_LN832404.1"/>
</dbReference>
<dbReference type="SMR" id="P39452"/>
<dbReference type="BioGRID" id="4259221">
    <property type="interactions" value="228"/>
</dbReference>
<dbReference type="BioGRID" id="851487">
    <property type="interactions" value="1"/>
</dbReference>
<dbReference type="ComplexPortal" id="CPX-5157">
    <property type="entry name" value="Ribonucleoside-diphosphate reductase 2 complex"/>
</dbReference>
<dbReference type="FunCoup" id="P39452">
    <property type="interactions" value="203"/>
</dbReference>
<dbReference type="IntAct" id="P39452">
    <property type="interactions" value="9"/>
</dbReference>
<dbReference type="STRING" id="511145.b2675"/>
<dbReference type="PaxDb" id="511145-b2675"/>
<dbReference type="EnsemblBacteria" id="AAC75722">
    <property type="protein sequence ID" value="AAC75722"/>
    <property type="gene ID" value="b2675"/>
</dbReference>
<dbReference type="GeneID" id="947155"/>
<dbReference type="KEGG" id="ecj:JW2650"/>
<dbReference type="KEGG" id="eco:b2675"/>
<dbReference type="KEGG" id="ecoc:C3026_14740"/>
<dbReference type="PATRIC" id="fig|1411691.4.peg.4066"/>
<dbReference type="EchoBASE" id="EB4158"/>
<dbReference type="eggNOG" id="COG0209">
    <property type="taxonomic scope" value="Bacteria"/>
</dbReference>
<dbReference type="HOGENOM" id="CLU_000404_4_1_6"/>
<dbReference type="InParanoid" id="P39452"/>
<dbReference type="OMA" id="TLFMTDK"/>
<dbReference type="OrthoDB" id="9762933at2"/>
<dbReference type="PhylomeDB" id="P39452"/>
<dbReference type="BioCyc" id="EcoCyc:NRDE-MONOMER"/>
<dbReference type="BioCyc" id="MetaCyc:NRDE-MONOMER"/>
<dbReference type="BRENDA" id="1.17.4.1">
    <property type="organism ID" value="2026"/>
</dbReference>
<dbReference type="PRO" id="PR:P39452"/>
<dbReference type="Proteomes" id="UP000000625">
    <property type="component" value="Chromosome"/>
</dbReference>
<dbReference type="GO" id="GO:0005971">
    <property type="term" value="C:ribonucleoside-diphosphate reductase complex"/>
    <property type="evidence" value="ECO:0000316"/>
    <property type="project" value="EcoliWiki"/>
</dbReference>
<dbReference type="GO" id="GO:0005524">
    <property type="term" value="F:ATP binding"/>
    <property type="evidence" value="ECO:0000318"/>
    <property type="project" value="GO_Central"/>
</dbReference>
<dbReference type="GO" id="GO:0004748">
    <property type="term" value="F:ribonucleoside-diphosphate reductase activity, thioredoxin disulfide as acceptor"/>
    <property type="evidence" value="ECO:0007669"/>
    <property type="project" value="UniProtKB-EC"/>
</dbReference>
<dbReference type="GO" id="GO:0009265">
    <property type="term" value="P:2'-deoxyribonucleotide biosynthetic process"/>
    <property type="evidence" value="ECO:0000250"/>
    <property type="project" value="ComplexPortal"/>
</dbReference>
<dbReference type="GO" id="GO:0009263">
    <property type="term" value="P:deoxyribonucleotide biosynthetic process"/>
    <property type="evidence" value="ECO:0000316"/>
    <property type="project" value="EcoliWiki"/>
</dbReference>
<dbReference type="GO" id="GO:0015949">
    <property type="term" value="P:nucleobase-containing small molecule interconversion"/>
    <property type="evidence" value="ECO:0000316"/>
    <property type="project" value="EcoliWiki"/>
</dbReference>
<dbReference type="GO" id="GO:0009185">
    <property type="term" value="P:ribonucleoside diphosphate metabolic process"/>
    <property type="evidence" value="ECO:0000250"/>
    <property type="project" value="ComplexPortal"/>
</dbReference>
<dbReference type="CDD" id="cd01679">
    <property type="entry name" value="RNR_I"/>
    <property type="match status" value="1"/>
</dbReference>
<dbReference type="FunFam" id="1.10.1650.20:FF:000002">
    <property type="entry name" value="Ribonucleoside-diphosphate reductase"/>
    <property type="match status" value="1"/>
</dbReference>
<dbReference type="Gene3D" id="1.10.1650.20">
    <property type="match status" value="1"/>
</dbReference>
<dbReference type="Gene3D" id="3.20.70.20">
    <property type="match status" value="1"/>
</dbReference>
<dbReference type="InterPro" id="IPR013346">
    <property type="entry name" value="NrdE_NrdA_C"/>
</dbReference>
<dbReference type="InterPro" id="IPR026459">
    <property type="entry name" value="RNR_1b_NrdE"/>
</dbReference>
<dbReference type="InterPro" id="IPR000788">
    <property type="entry name" value="RNR_lg_C"/>
</dbReference>
<dbReference type="InterPro" id="IPR013509">
    <property type="entry name" value="RNR_lsu_N"/>
</dbReference>
<dbReference type="InterPro" id="IPR013554">
    <property type="entry name" value="RNR_N"/>
</dbReference>
<dbReference type="InterPro" id="IPR008926">
    <property type="entry name" value="RNR_R1-su_N"/>
</dbReference>
<dbReference type="InterPro" id="IPR039718">
    <property type="entry name" value="Rrm1"/>
</dbReference>
<dbReference type="NCBIfam" id="TIGR02506">
    <property type="entry name" value="NrdE_NrdA"/>
    <property type="match status" value="1"/>
</dbReference>
<dbReference type="NCBIfam" id="TIGR04170">
    <property type="entry name" value="RNR_1b_NrdE"/>
    <property type="match status" value="1"/>
</dbReference>
<dbReference type="PANTHER" id="PTHR11573:SF30">
    <property type="entry name" value="RIBONUCLEOSIDE-DIPHOSPHATE REDUCTASE 2 SUBUNIT ALPHA"/>
    <property type="match status" value="1"/>
</dbReference>
<dbReference type="PANTHER" id="PTHR11573">
    <property type="entry name" value="RIBONUCLEOSIDE-DIPHOSPHATE REDUCTASE LARGE CHAIN"/>
    <property type="match status" value="1"/>
</dbReference>
<dbReference type="Pfam" id="PF02867">
    <property type="entry name" value="Ribonuc_red_lgC"/>
    <property type="match status" value="1"/>
</dbReference>
<dbReference type="Pfam" id="PF00317">
    <property type="entry name" value="Ribonuc_red_lgN"/>
    <property type="match status" value="1"/>
</dbReference>
<dbReference type="Pfam" id="PF08343">
    <property type="entry name" value="RNR_N"/>
    <property type="match status" value="1"/>
</dbReference>
<dbReference type="PRINTS" id="PR01183">
    <property type="entry name" value="RIBORDTASEM1"/>
</dbReference>
<dbReference type="SUPFAM" id="SSF51998">
    <property type="entry name" value="PFL-like glycyl radical enzymes"/>
    <property type="match status" value="1"/>
</dbReference>
<dbReference type="SUPFAM" id="SSF48168">
    <property type="entry name" value="R1 subunit of ribonucleotide reductase, N-terminal domain"/>
    <property type="match status" value="1"/>
</dbReference>
<dbReference type="PROSITE" id="PS00089">
    <property type="entry name" value="RIBORED_LARGE"/>
    <property type="match status" value="1"/>
</dbReference>
<name>RIR3_ECOLI</name>
<feature type="initiator methionine" description="Removed" evidence="1">
    <location>
        <position position="1"/>
    </location>
</feature>
<feature type="chain" id="PRO_0000187224" description="Ribonucleoside-diphosphate reductase 2 subunit alpha">
    <location>
        <begin position="2"/>
        <end position="714"/>
    </location>
</feature>
<feature type="active site" description="Proton acceptor" evidence="1">
    <location>
        <position position="386"/>
    </location>
</feature>
<feature type="active site" description="Cysteine radical intermediate" evidence="1">
    <location>
        <position position="388"/>
    </location>
</feature>
<feature type="active site" description="Proton acceptor" evidence="1">
    <location>
        <position position="390"/>
    </location>
</feature>
<feature type="binding site" evidence="1">
    <location>
        <position position="161"/>
    </location>
    <ligand>
        <name>substrate</name>
    </ligand>
</feature>
<feature type="binding site" evidence="1">
    <location>
        <begin position="177"/>
        <end position="178"/>
    </location>
    <ligand>
        <name>substrate</name>
    </ligand>
</feature>
<feature type="binding site" evidence="1">
    <location>
        <position position="206"/>
    </location>
    <ligand>
        <name>substrate</name>
    </ligand>
</feature>
<feature type="binding site" evidence="1">
    <location>
        <begin position="386"/>
        <end position="390"/>
    </location>
    <ligand>
        <name>substrate</name>
    </ligand>
</feature>
<feature type="binding site" evidence="1">
    <location>
        <begin position="588"/>
        <end position="592"/>
    </location>
    <ligand>
        <name>substrate</name>
    </ligand>
</feature>
<feature type="site" description="Important for hydrogen atom transfer" evidence="1">
    <location>
        <position position="178"/>
    </location>
</feature>
<feature type="site" description="Allosteric effector binding" evidence="1">
    <location>
        <position position="185"/>
    </location>
</feature>
<feature type="site" description="Allosteric effector binding" evidence="1">
    <location>
        <position position="215"/>
    </location>
</feature>
<feature type="site" description="Important for hydrogen atom transfer" evidence="1">
    <location>
        <position position="415"/>
    </location>
</feature>
<feature type="site" description="Important for electron transfer" evidence="1">
    <location>
        <position position="692"/>
    </location>
</feature>
<feature type="site" description="Important for electron transfer" evidence="1">
    <location>
        <position position="693"/>
    </location>
</feature>
<feature type="site" description="Interacts with thioredoxin/glutaredoxin" evidence="1">
    <location>
        <position position="709"/>
    </location>
</feature>
<feature type="site" description="Interacts with thioredoxin/glutaredoxin" evidence="1">
    <location>
        <position position="712"/>
    </location>
</feature>
<feature type="disulfide bond" description="Redox-active" evidence="1">
    <location>
        <begin position="178"/>
        <end position="415"/>
    </location>
</feature>
<feature type="sequence conflict" description="In Ref. 5; M31530." evidence="3" ref="5">
    <original>K</original>
    <variation>P</variation>
    <location>
        <position position="545"/>
    </location>
</feature>
<feature type="sequence conflict" description="In Ref. 5; M31530." evidence="3" ref="5">
    <original>K</original>
    <variation>H</variation>
    <location>
        <position position="548"/>
    </location>
</feature>
<feature type="sequence conflict" description="In Ref. 5; M31530." evidence="3" ref="5">
    <original>EL</original>
    <variation>AP</variation>
    <location>
        <begin position="551"/>
        <end position="552"/>
    </location>
</feature>
<feature type="sequence conflict" description="In Ref. 5; M31530." evidence="3" ref="5">
    <original>S</original>
    <variation>R</variation>
    <location>
        <position position="556"/>
    </location>
</feature>
<reference key="1">
    <citation type="journal article" date="1997" name="DNA Res.">
        <title>Construction of a contiguous 874-kb sequence of the Escherichia coli-K12 genome corresponding to 50.0-68.8 min on the linkage map and analysis of its sequence features.</title>
        <authorList>
            <person name="Yamamoto Y."/>
            <person name="Aiba H."/>
            <person name="Baba T."/>
            <person name="Hayashi K."/>
            <person name="Inada T."/>
            <person name="Isono K."/>
            <person name="Itoh T."/>
            <person name="Kimura S."/>
            <person name="Kitagawa M."/>
            <person name="Makino K."/>
            <person name="Miki T."/>
            <person name="Mitsuhashi N."/>
            <person name="Mizobuchi K."/>
            <person name="Mori H."/>
            <person name="Nakade S."/>
            <person name="Nakamura Y."/>
            <person name="Nashimoto H."/>
            <person name="Oshima T."/>
            <person name="Oyama S."/>
            <person name="Saito N."/>
            <person name="Sampei G."/>
            <person name="Satoh Y."/>
            <person name="Sivasundaram S."/>
            <person name="Tagami H."/>
            <person name="Takahashi H."/>
            <person name="Takeda J."/>
            <person name="Takemoto K."/>
            <person name="Uehara K."/>
            <person name="Wada C."/>
            <person name="Yamagata S."/>
            <person name="Horiuchi T."/>
        </authorList>
    </citation>
    <scope>NUCLEOTIDE SEQUENCE [LARGE SCALE GENOMIC DNA]</scope>
    <source>
        <strain>K12 / W3110 / ATCC 27325 / DSM 5911</strain>
    </source>
</reference>
<reference key="2">
    <citation type="journal article" date="1997" name="Science">
        <title>The complete genome sequence of Escherichia coli K-12.</title>
        <authorList>
            <person name="Blattner F.R."/>
            <person name="Plunkett G. III"/>
            <person name="Bloch C.A."/>
            <person name="Perna N.T."/>
            <person name="Burland V."/>
            <person name="Riley M."/>
            <person name="Collado-Vides J."/>
            <person name="Glasner J.D."/>
            <person name="Rode C.K."/>
            <person name="Mayhew G.F."/>
            <person name="Gregor J."/>
            <person name="Davis N.W."/>
            <person name="Kirkpatrick H.A."/>
            <person name="Goeden M.A."/>
            <person name="Rose D.J."/>
            <person name="Mau B."/>
            <person name="Shao Y."/>
        </authorList>
    </citation>
    <scope>NUCLEOTIDE SEQUENCE [LARGE SCALE GENOMIC DNA]</scope>
    <source>
        <strain>K12 / MG1655 / ATCC 47076</strain>
    </source>
</reference>
<reference key="3">
    <citation type="journal article" date="2006" name="Mol. Syst. Biol.">
        <title>Highly accurate genome sequences of Escherichia coli K-12 strains MG1655 and W3110.</title>
        <authorList>
            <person name="Hayashi K."/>
            <person name="Morooka N."/>
            <person name="Yamamoto Y."/>
            <person name="Fujita K."/>
            <person name="Isono K."/>
            <person name="Choi S."/>
            <person name="Ohtsubo E."/>
            <person name="Baba T."/>
            <person name="Wanner B.L."/>
            <person name="Mori H."/>
            <person name="Horiuchi T."/>
        </authorList>
    </citation>
    <scope>NUCLEOTIDE SEQUENCE [LARGE SCALE GENOMIC DNA]</scope>
    <scope>SEQUENCE REVISION</scope>
    <source>
        <strain>K12 / W3110 / ATCC 27325 / DSM 5911</strain>
    </source>
</reference>
<reference key="4">
    <citation type="journal article" date="1996" name="Mol. Microbiol.">
        <title>Promoter identification and expression analysis of Salmonella typhimurium and Escherichia coli nrdEF operons encoding one of two class I ribonucleotide reductases present in both bacteria.</title>
        <authorList>
            <person name="Jordan A."/>
            <person name="Aragall E."/>
            <person name="Gibert I."/>
            <person name="Barbe J."/>
        </authorList>
    </citation>
    <scope>NUCLEOTIDE SEQUENCE [GENOMIC DNA] OF 1-103</scope>
    <source>
        <strain>K12</strain>
    </source>
</reference>
<reference key="5">
    <citation type="journal article" date="1990" name="J. Bacteriol.">
        <title>Bacterial transposon Tn7 utilizes two different classes of target sites.</title>
        <authorList>
            <person name="Kubo K.M."/>
            <person name="Craig N.L."/>
        </authorList>
    </citation>
    <scope>NUCLEOTIDE SEQUENCE [GENOMIC DNA] OF 544-566</scope>
</reference>
<reference key="6">
    <citation type="journal article" date="2009" name="Mol. Cell">
        <title>Hydroxyurea induces hydroxyl radical-mediated cell death in Escherichia coli.</title>
        <authorList>
            <person name="Davies B.W."/>
            <person name="Kohanski M.A."/>
            <person name="Simmons L.A."/>
            <person name="Winkler J.A."/>
            <person name="Collins J.J."/>
            <person name="Walker G.C."/>
        </authorList>
    </citation>
    <scope>INDUCTION BY HYDROXYUREA</scope>
    <source>
        <strain>K12 / MC4100 / ATCC 35695 / DSM 6574</strain>
    </source>
</reference>
<proteinExistence type="evidence at transcript level"/>
<evidence type="ECO:0000250" key="1"/>
<evidence type="ECO:0000269" key="2">
    <source>
    </source>
</evidence>
<evidence type="ECO:0000305" key="3"/>
<comment type="function">
    <text>Provides the precursors necessary for DNA synthesis. Catalyzes the biosynthesis of deoxyribonucleotides from the corresponding ribonucleotides. R1E contains the binding sites for both substrates and allosteric effectors and carries out the actual reduction of the ribonucleotide.</text>
</comment>
<comment type="catalytic activity">
    <reaction>
        <text>a 2'-deoxyribonucleoside 5'-diphosphate + [thioredoxin]-disulfide + H2O = a ribonucleoside 5'-diphosphate + [thioredoxin]-dithiol</text>
        <dbReference type="Rhea" id="RHEA:23252"/>
        <dbReference type="Rhea" id="RHEA-COMP:10698"/>
        <dbReference type="Rhea" id="RHEA-COMP:10700"/>
        <dbReference type="ChEBI" id="CHEBI:15377"/>
        <dbReference type="ChEBI" id="CHEBI:29950"/>
        <dbReference type="ChEBI" id="CHEBI:50058"/>
        <dbReference type="ChEBI" id="CHEBI:57930"/>
        <dbReference type="ChEBI" id="CHEBI:73316"/>
        <dbReference type="EC" id="1.17.4.1"/>
    </reaction>
</comment>
<comment type="activity regulation">
    <text evidence="1">Under complex allosteric control mediated by deoxynucleoside triphosphates and ATP binding. The type of nucleotide bound at the specificity site determines substrate preference. It seems probable that ATP makes the enzyme reduce CDP and UDP, dGTP favors ADP reduction and dTTP favors GDP reduction (By similarity).</text>
</comment>
<comment type="subunit">
    <text evidence="1">Tetramer of two alpha and two beta subunits.</text>
</comment>
<comment type="induction">
    <text evidence="2">Induced 2-fold by hydroxyurea.</text>
</comment>
<comment type="similarity">
    <text evidence="3">Belongs to the ribonucleoside diphosphate reductase large chain family.</text>
</comment>
<keyword id="KW-0021">Allosteric enzyme</keyword>
<keyword id="KW-0067">ATP-binding</keyword>
<keyword id="KW-0215">Deoxyribonucleotide synthesis</keyword>
<keyword id="KW-1015">Disulfide bond</keyword>
<keyword id="KW-0547">Nucleotide-binding</keyword>
<keyword id="KW-0560">Oxidoreductase</keyword>
<keyword id="KW-1185">Reference proteome</keyword>
<organism>
    <name type="scientific">Escherichia coli (strain K12)</name>
    <dbReference type="NCBI Taxonomy" id="83333"/>
    <lineage>
        <taxon>Bacteria</taxon>
        <taxon>Pseudomonadati</taxon>
        <taxon>Pseudomonadota</taxon>
        <taxon>Gammaproteobacteria</taxon>
        <taxon>Enterobacterales</taxon>
        <taxon>Enterobacteriaceae</taxon>
        <taxon>Escherichia</taxon>
    </lineage>
</organism>
<accession>P39452</accession>
<accession>P78101</accession>
<accession>P78210</accession>
<accession>P78211</accession>
<accession>Q59417</accession>
<sequence>MATTTAECLTQETMDYHALNAMLNLYDSAGRIQFDKDRQAVDAFIATHVRPNSVTFSSQQQRLNWLVNEGYYDESVLNRYSRDFVITLFTHAHTSGFRFQTFLGAWKFYTSYTLKTFDGKRYLEDFADRVTMVALTLAQGDETLALQLTDEMLSGRFQPATPTFLNCGKQQRGELVSCFLLRIEDNMESIGRAVNSALQLSKRGGGVAFLLSNLREAGAPIKRIENQSSGVIPVMKMLEDAFSYANQLGARQGAGAVYLHAHHPDILRFLDTKRENADEKIRIKTLSLGVVIPDITFHLAKENAQMALFSPYDVERVYGKPFADVAISQHYDELVADERIRKKYLNARDFFQRLAEIQFESGYPYIMYEDTVNRANPIAGRINMSNLCSEILQVNSASEYDENLDYTRTGHDISCNLGSLNIAHTMDSPDFARTVETAVRGLTAVSDMSHIRSVPSIEAGNAASHAIGLGQMNLHGYLAREGIAYGSPEALDFTNLYFYAITWHALRTSMLLARERGETFAGFKQSRYASGEYFSQYLQGNWQPKTAKVGELFTRSGITLPTREMWAQLRDDVMRYGIYNQNLQAVPPTGSISYINHATSSIHPIVAKVEIRKEGKTGRVYYPAPFMTNENLALYQDAYEIGAEKIIDTYAEATRHVDQGLSLTLFFPDTATTRDINKAQIYAWRKGIKTLYYIRLRQMALEGTEIEGCVSCAL</sequence>
<gene>
    <name type="primary">nrdE</name>
    <name type="ordered locus">b2675</name>
    <name type="ordered locus">JW2650</name>
</gene>
<protein>
    <recommendedName>
        <fullName>Ribonucleoside-diphosphate reductase 2 subunit alpha</fullName>
        <ecNumber>1.17.4.1</ecNumber>
    </recommendedName>
    <alternativeName>
        <fullName>R1E protein</fullName>
    </alternativeName>
    <alternativeName>
        <fullName>Ribonucleotide reductase 2</fullName>
    </alternativeName>
</protein>